<reference key="1">
    <citation type="journal article" date="2003" name="J. Biotechnol.">
        <title>Genome-based analysis of biosynthetic aminotransferase genes of Corynebacterium glutamicum.</title>
        <authorList>
            <person name="McHardy A.C."/>
            <person name="Tauch A."/>
            <person name="Rueckert C."/>
            <person name="Puehler A."/>
            <person name="Kalinowski J."/>
        </authorList>
    </citation>
    <scope>NUCLEOTIDE SEQUENCE [GENOMIC DNA]</scope>
    <scope>FUNCTION</scope>
    <source>
        <strain>ATCC 13032 / DSM 20300 / JCM 1318 / BCRC 11384 / CCUG 27702 / LMG 3730 / NBRC 12168 / NCIMB 10025 / NRRL B-2784 / 534</strain>
    </source>
</reference>
<reference key="2">
    <citation type="journal article" date="2003" name="Appl. Microbiol. Biotechnol.">
        <title>The Corynebacterium glutamicum genome: features and impacts on biotechnological processes.</title>
        <authorList>
            <person name="Ikeda M."/>
            <person name="Nakagawa S."/>
        </authorList>
    </citation>
    <scope>NUCLEOTIDE SEQUENCE [LARGE SCALE GENOMIC DNA]</scope>
    <source>
        <strain>ATCC 13032 / DSM 20300 / JCM 1318 / BCRC 11384 / CCUG 27702 / LMG 3730 / NBRC 12168 / NCIMB 10025 / NRRL B-2784 / 534</strain>
    </source>
</reference>
<reference key="3">
    <citation type="journal article" date="2003" name="J. Biotechnol.">
        <title>The complete Corynebacterium glutamicum ATCC 13032 genome sequence and its impact on the production of L-aspartate-derived amino acids and vitamins.</title>
        <authorList>
            <person name="Kalinowski J."/>
            <person name="Bathe B."/>
            <person name="Bartels D."/>
            <person name="Bischoff N."/>
            <person name="Bott M."/>
            <person name="Burkovski A."/>
            <person name="Dusch N."/>
            <person name="Eggeling L."/>
            <person name="Eikmanns B.J."/>
            <person name="Gaigalat L."/>
            <person name="Goesmann A."/>
            <person name="Hartmann M."/>
            <person name="Huthmacher K."/>
            <person name="Kraemer R."/>
            <person name="Linke B."/>
            <person name="McHardy A.C."/>
            <person name="Meyer F."/>
            <person name="Moeckel B."/>
            <person name="Pfefferle W."/>
            <person name="Puehler A."/>
            <person name="Rey D.A."/>
            <person name="Rueckert C."/>
            <person name="Rupp O."/>
            <person name="Sahm H."/>
            <person name="Wendisch V.F."/>
            <person name="Wiegraebe I."/>
            <person name="Tauch A."/>
        </authorList>
    </citation>
    <scope>NUCLEOTIDE SEQUENCE [LARGE SCALE GENOMIC DNA]</scope>
    <source>
        <strain>ATCC 13032 / DSM 20300 / JCM 1318 / BCRC 11384 / CCUG 27702 / LMG 3730 / NBRC 12168 / NCIMB 10025 / NRRL B-2784 / 534</strain>
    </source>
</reference>
<protein>
    <recommendedName>
        <fullName>HTH-type pyridoxine biosynthesis transcriptional regulator PdxR</fullName>
    </recommendedName>
</protein>
<comment type="function">
    <text evidence="2">May have a regulatory function in pyridoxine biosynthesis. Is said to also have an aminotransferase activity in valine biosynthesis as a double inactivation of ilvE and pdxR results in an auxotrophic requirement for valine.</text>
</comment>
<comment type="cofactor">
    <cofactor evidence="3">
        <name>pyridoxal 5'-phosphate</name>
        <dbReference type="ChEBI" id="CHEBI:597326"/>
    </cofactor>
</comment>
<comment type="similarity">
    <text evidence="3">In the C-terminal section; belongs to the class-I pyridoxal-phosphate-dependent aminotransferase family.</text>
</comment>
<comment type="caution">
    <text evidence="3">Ser-301 is present instead of the conserved Lys which is expected to be the pyridoxal phosphate-binding residue which is required for activity in all known pyridoxal-dependent aminotransferases.</text>
</comment>
<accession>Q8NS92</accession>
<accession>Q6M6Z5</accession>
<accession>Q79K85</accession>
<gene>
    <name type="primary">pdxR</name>
    <name type="ordered locus">Cgl0787</name>
    <name type="ordered locus">cg0897</name>
</gene>
<organism>
    <name type="scientific">Corynebacterium glutamicum (strain ATCC 13032 / DSM 20300 / JCM 1318 / BCRC 11384 / CCUG 27702 / LMG 3730 / NBRC 12168 / NCIMB 10025 / NRRL B-2784 / 534)</name>
    <dbReference type="NCBI Taxonomy" id="196627"/>
    <lineage>
        <taxon>Bacteria</taxon>
        <taxon>Bacillati</taxon>
        <taxon>Actinomycetota</taxon>
        <taxon>Actinomycetes</taxon>
        <taxon>Mycobacteriales</taxon>
        <taxon>Corynebacteriaceae</taxon>
        <taxon>Corynebacterium</taxon>
    </lineage>
</organism>
<proteinExistence type="inferred from homology"/>
<sequence length="453" mass="48859">MLADLPIALNPHEPTSIPTQLTEQIRRLVARGILTPGDPLPSSRSLSTQLGVSRGSVVTAYDQLAGEGYLSTARGSGTTINPDLHLLKPVEIEKKETSRSVPPPLLNLSPGVPDTATLADSAWRAAWREACAKPPTHSPEQGLLRLRIEIADHLRQMRGLMVEPEQIIVTAGAREGLSLLLRTMDAPARIGVESPGYPSLRRIPQVLGHETIDVPTDESGLVPRALPHDLNALLVTPSHQYPYGGSLPADRRTALVAWAEANDALLIEDDFDSELRYVGMPLPPLRALAPDRTILLGTFSSVITPQVACGYLIAPTPQARVLATLRGILGQPVGAITQHALASYLASGALRRRTQRLRRLYRHRRSIVQDTLGDLPNTQLRPINGGLHAVLLCDKPQDLVVTTLASRGLNVTALSHYWGGTGADNGIVFGFGSHDEDTLRWVLAEISDAVSLG</sequence>
<keyword id="KW-0032">Aminotransferase</keyword>
<keyword id="KW-0238">DNA-binding</keyword>
<keyword id="KW-0663">Pyridoxal phosphate</keyword>
<keyword id="KW-1185">Reference proteome</keyword>
<keyword id="KW-0804">Transcription</keyword>
<keyword id="KW-0805">Transcription regulation</keyword>
<keyword id="KW-0808">Transferase</keyword>
<name>PDXR_CORGL</name>
<evidence type="ECO:0000255" key="1">
    <source>
        <dbReference type="PROSITE-ProRule" id="PRU00307"/>
    </source>
</evidence>
<evidence type="ECO:0000269" key="2">
    <source>
    </source>
</evidence>
<evidence type="ECO:0000305" key="3"/>
<dbReference type="EMBL" id="AY238321">
    <property type="protein sequence ID" value="AAO92312.1"/>
    <property type="molecule type" value="Genomic_DNA"/>
</dbReference>
<dbReference type="EMBL" id="BA000036">
    <property type="protein sequence ID" value="BAB98180.1"/>
    <property type="molecule type" value="Genomic_DNA"/>
</dbReference>
<dbReference type="EMBL" id="BX927150">
    <property type="protein sequence ID" value="CAF19492.1"/>
    <property type="molecule type" value="Genomic_DNA"/>
</dbReference>
<dbReference type="RefSeq" id="NP_600015.1">
    <property type="nucleotide sequence ID" value="NC_003450.3"/>
</dbReference>
<dbReference type="RefSeq" id="WP_011013887.1">
    <property type="nucleotide sequence ID" value="NC_006958.1"/>
</dbReference>
<dbReference type="SMR" id="Q8NS92"/>
<dbReference type="STRING" id="196627.cg0897"/>
<dbReference type="DNASU" id="1018782"/>
<dbReference type="GeneID" id="1018782"/>
<dbReference type="KEGG" id="cgb:cg0897"/>
<dbReference type="KEGG" id="cgl:Cgl0787"/>
<dbReference type="PATRIC" id="fig|196627.13.peg.772"/>
<dbReference type="eggNOG" id="COG1167">
    <property type="taxonomic scope" value="Bacteria"/>
</dbReference>
<dbReference type="HOGENOM" id="CLU_017584_0_1_11"/>
<dbReference type="OrthoDB" id="199743at2"/>
<dbReference type="BioCyc" id="CORYNE:G18NG-10349-MONOMER"/>
<dbReference type="Proteomes" id="UP000000582">
    <property type="component" value="Chromosome"/>
</dbReference>
<dbReference type="Proteomes" id="UP000001009">
    <property type="component" value="Chromosome"/>
</dbReference>
<dbReference type="GO" id="GO:0003677">
    <property type="term" value="F:DNA binding"/>
    <property type="evidence" value="ECO:0007669"/>
    <property type="project" value="UniProtKB-KW"/>
</dbReference>
<dbReference type="GO" id="GO:0003700">
    <property type="term" value="F:DNA-binding transcription factor activity"/>
    <property type="evidence" value="ECO:0007669"/>
    <property type="project" value="InterPro"/>
</dbReference>
<dbReference type="GO" id="GO:0008483">
    <property type="term" value="F:transaminase activity"/>
    <property type="evidence" value="ECO:0007669"/>
    <property type="project" value="UniProtKB-KW"/>
</dbReference>
<dbReference type="CDD" id="cd00609">
    <property type="entry name" value="AAT_like"/>
    <property type="match status" value="1"/>
</dbReference>
<dbReference type="CDD" id="cd07377">
    <property type="entry name" value="WHTH_GntR"/>
    <property type="match status" value="1"/>
</dbReference>
<dbReference type="Gene3D" id="3.40.640.10">
    <property type="entry name" value="Type I PLP-dependent aspartate aminotransferase-like (Major domain)"/>
    <property type="match status" value="1"/>
</dbReference>
<dbReference type="Gene3D" id="1.10.10.10">
    <property type="entry name" value="Winged helix-like DNA-binding domain superfamily/Winged helix DNA-binding domain"/>
    <property type="match status" value="1"/>
</dbReference>
<dbReference type="InterPro" id="IPR051446">
    <property type="entry name" value="HTH_trans_reg/aminotransferase"/>
</dbReference>
<dbReference type="InterPro" id="IPR015424">
    <property type="entry name" value="PyrdxlP-dep_Trfase"/>
</dbReference>
<dbReference type="InterPro" id="IPR015421">
    <property type="entry name" value="PyrdxlP-dep_Trfase_major"/>
</dbReference>
<dbReference type="InterPro" id="IPR000524">
    <property type="entry name" value="Tscrpt_reg_HTH_GntR"/>
</dbReference>
<dbReference type="InterPro" id="IPR036388">
    <property type="entry name" value="WH-like_DNA-bd_sf"/>
</dbReference>
<dbReference type="InterPro" id="IPR036390">
    <property type="entry name" value="WH_DNA-bd_sf"/>
</dbReference>
<dbReference type="PANTHER" id="PTHR46577">
    <property type="entry name" value="HTH-TYPE TRANSCRIPTIONAL REGULATORY PROTEIN GABR"/>
    <property type="match status" value="1"/>
</dbReference>
<dbReference type="PANTHER" id="PTHR46577:SF1">
    <property type="entry name" value="HTH-TYPE TRANSCRIPTIONAL REGULATORY PROTEIN GABR"/>
    <property type="match status" value="1"/>
</dbReference>
<dbReference type="Pfam" id="PF00392">
    <property type="entry name" value="GntR"/>
    <property type="match status" value="1"/>
</dbReference>
<dbReference type="PRINTS" id="PR00035">
    <property type="entry name" value="HTHGNTR"/>
</dbReference>
<dbReference type="SMART" id="SM00345">
    <property type="entry name" value="HTH_GNTR"/>
    <property type="match status" value="1"/>
</dbReference>
<dbReference type="SUPFAM" id="SSF53383">
    <property type="entry name" value="PLP-dependent transferases"/>
    <property type="match status" value="1"/>
</dbReference>
<dbReference type="SUPFAM" id="SSF46785">
    <property type="entry name" value="Winged helix' DNA-binding domain"/>
    <property type="match status" value="1"/>
</dbReference>
<dbReference type="PROSITE" id="PS50949">
    <property type="entry name" value="HTH_GNTR"/>
    <property type="match status" value="1"/>
</dbReference>
<feature type="chain" id="PRO_0000305243" description="HTH-type pyridoxine biosynthesis transcriptional regulator PdxR">
    <location>
        <begin position="1"/>
        <end position="453"/>
    </location>
</feature>
<feature type="domain" description="HTH gntR-type" evidence="1">
    <location>
        <begin position="15"/>
        <end position="83"/>
    </location>
</feature>
<feature type="DNA-binding region" description="H-T-H motif" evidence="1">
    <location>
        <begin position="43"/>
        <end position="62"/>
    </location>
</feature>